<sequence>MQTSPLLTQLMEALRCLPGVGPKSAQRMAFTLLQRDRSGGMRLAQALTRAMSEIGHCADCRTFTEQEVCNICSNPRRQENGQICVVESPADIYAIEQTGQFSGRYFVLMGHLSPLDGIGPDDIGLDRLEQRLAEEKITEVILATNPTVEGEATANYIAELCAQYDVEASRIAHGVPVGGELEMVDGTTLSHSLAGRHKIRF</sequence>
<keyword id="KW-0227">DNA damage</keyword>
<keyword id="KW-0233">DNA recombination</keyword>
<keyword id="KW-0234">DNA repair</keyword>
<keyword id="KW-0479">Metal-binding</keyword>
<keyword id="KW-0862">Zinc</keyword>
<keyword id="KW-0863">Zinc-finger</keyword>
<comment type="function">
    <text evidence="1">May play a role in DNA repair. It seems to be involved in an RecBC-independent recombinational process of DNA repair. It may act with RecF and RecO.</text>
</comment>
<comment type="similarity">
    <text evidence="1">Belongs to the RecR family.</text>
</comment>
<reference key="1">
    <citation type="journal article" date="2009" name="PLoS Genet.">
        <title>Organised genome dynamics in the Escherichia coli species results in highly diverse adaptive paths.</title>
        <authorList>
            <person name="Touchon M."/>
            <person name="Hoede C."/>
            <person name="Tenaillon O."/>
            <person name="Barbe V."/>
            <person name="Baeriswyl S."/>
            <person name="Bidet P."/>
            <person name="Bingen E."/>
            <person name="Bonacorsi S."/>
            <person name="Bouchier C."/>
            <person name="Bouvet O."/>
            <person name="Calteau A."/>
            <person name="Chiapello H."/>
            <person name="Clermont O."/>
            <person name="Cruveiller S."/>
            <person name="Danchin A."/>
            <person name="Diard M."/>
            <person name="Dossat C."/>
            <person name="Karoui M.E."/>
            <person name="Frapy E."/>
            <person name="Garry L."/>
            <person name="Ghigo J.M."/>
            <person name="Gilles A.M."/>
            <person name="Johnson J."/>
            <person name="Le Bouguenec C."/>
            <person name="Lescat M."/>
            <person name="Mangenot S."/>
            <person name="Martinez-Jehanne V."/>
            <person name="Matic I."/>
            <person name="Nassif X."/>
            <person name="Oztas S."/>
            <person name="Petit M.A."/>
            <person name="Pichon C."/>
            <person name="Rouy Z."/>
            <person name="Ruf C.S."/>
            <person name="Schneider D."/>
            <person name="Tourret J."/>
            <person name="Vacherie B."/>
            <person name="Vallenet D."/>
            <person name="Medigue C."/>
            <person name="Rocha E.P.C."/>
            <person name="Denamur E."/>
        </authorList>
    </citation>
    <scope>NUCLEOTIDE SEQUENCE [LARGE SCALE GENOMIC DNA]</scope>
    <source>
        <strain>IAI1</strain>
    </source>
</reference>
<name>RECR_ECO8A</name>
<protein>
    <recommendedName>
        <fullName evidence="1">Recombination protein RecR</fullName>
    </recommendedName>
</protein>
<organism>
    <name type="scientific">Escherichia coli O8 (strain IAI1)</name>
    <dbReference type="NCBI Taxonomy" id="585034"/>
    <lineage>
        <taxon>Bacteria</taxon>
        <taxon>Pseudomonadati</taxon>
        <taxon>Pseudomonadota</taxon>
        <taxon>Gammaproteobacteria</taxon>
        <taxon>Enterobacterales</taxon>
        <taxon>Enterobacteriaceae</taxon>
        <taxon>Escherichia</taxon>
    </lineage>
</organism>
<feature type="chain" id="PRO_1000195388" description="Recombination protein RecR">
    <location>
        <begin position="1"/>
        <end position="201"/>
    </location>
</feature>
<feature type="domain" description="Toprim" evidence="1">
    <location>
        <begin position="81"/>
        <end position="176"/>
    </location>
</feature>
<feature type="zinc finger region" description="C4-type" evidence="1">
    <location>
        <begin position="57"/>
        <end position="72"/>
    </location>
</feature>
<accession>B7M3W4</accession>
<proteinExistence type="inferred from homology"/>
<evidence type="ECO:0000255" key="1">
    <source>
        <dbReference type="HAMAP-Rule" id="MF_00017"/>
    </source>
</evidence>
<dbReference type="EMBL" id="CU928160">
    <property type="protein sequence ID" value="CAQ97347.1"/>
    <property type="molecule type" value="Genomic_DNA"/>
</dbReference>
<dbReference type="RefSeq" id="WP_001195025.1">
    <property type="nucleotide sequence ID" value="NC_011741.1"/>
</dbReference>
<dbReference type="SMR" id="B7M3W4"/>
<dbReference type="GeneID" id="93776978"/>
<dbReference type="KEGG" id="ecr:ECIAI1_0475"/>
<dbReference type="HOGENOM" id="CLU_060739_1_2_6"/>
<dbReference type="GO" id="GO:0003677">
    <property type="term" value="F:DNA binding"/>
    <property type="evidence" value="ECO:0007669"/>
    <property type="project" value="UniProtKB-UniRule"/>
</dbReference>
<dbReference type="GO" id="GO:0008270">
    <property type="term" value="F:zinc ion binding"/>
    <property type="evidence" value="ECO:0007669"/>
    <property type="project" value="UniProtKB-KW"/>
</dbReference>
<dbReference type="GO" id="GO:0006310">
    <property type="term" value="P:DNA recombination"/>
    <property type="evidence" value="ECO:0007669"/>
    <property type="project" value="UniProtKB-UniRule"/>
</dbReference>
<dbReference type="GO" id="GO:0006281">
    <property type="term" value="P:DNA repair"/>
    <property type="evidence" value="ECO:0007669"/>
    <property type="project" value="UniProtKB-UniRule"/>
</dbReference>
<dbReference type="CDD" id="cd01025">
    <property type="entry name" value="TOPRIM_recR"/>
    <property type="match status" value="1"/>
</dbReference>
<dbReference type="FunFam" id="1.10.8.420:FF:000001">
    <property type="entry name" value="Recombination protein RecR"/>
    <property type="match status" value="1"/>
</dbReference>
<dbReference type="FunFam" id="3.40.1360.10:FF:000001">
    <property type="entry name" value="Recombination protein RecR"/>
    <property type="match status" value="1"/>
</dbReference>
<dbReference type="Gene3D" id="3.40.1360.10">
    <property type="match status" value="1"/>
</dbReference>
<dbReference type="Gene3D" id="6.10.250.240">
    <property type="match status" value="1"/>
</dbReference>
<dbReference type="Gene3D" id="1.10.8.420">
    <property type="entry name" value="RecR Domain 1"/>
    <property type="match status" value="1"/>
</dbReference>
<dbReference type="HAMAP" id="MF_00017">
    <property type="entry name" value="RecR"/>
    <property type="match status" value="1"/>
</dbReference>
<dbReference type="InterPro" id="IPR000093">
    <property type="entry name" value="DNA_Rcmb_RecR"/>
</dbReference>
<dbReference type="InterPro" id="IPR023627">
    <property type="entry name" value="Rcmb_RecR"/>
</dbReference>
<dbReference type="InterPro" id="IPR015967">
    <property type="entry name" value="Rcmb_RecR_Znf"/>
</dbReference>
<dbReference type="InterPro" id="IPR006171">
    <property type="entry name" value="TOPRIM_dom"/>
</dbReference>
<dbReference type="InterPro" id="IPR034137">
    <property type="entry name" value="TOPRIM_RecR"/>
</dbReference>
<dbReference type="NCBIfam" id="TIGR00615">
    <property type="entry name" value="recR"/>
    <property type="match status" value="1"/>
</dbReference>
<dbReference type="PANTHER" id="PTHR30446">
    <property type="entry name" value="RECOMBINATION PROTEIN RECR"/>
    <property type="match status" value="1"/>
</dbReference>
<dbReference type="PANTHER" id="PTHR30446:SF0">
    <property type="entry name" value="RECOMBINATION PROTEIN RECR"/>
    <property type="match status" value="1"/>
</dbReference>
<dbReference type="Pfam" id="PF21175">
    <property type="entry name" value="RecR_C"/>
    <property type="match status" value="1"/>
</dbReference>
<dbReference type="Pfam" id="PF21176">
    <property type="entry name" value="RecR_HhH"/>
    <property type="match status" value="1"/>
</dbReference>
<dbReference type="Pfam" id="PF02132">
    <property type="entry name" value="RecR_ZnF"/>
    <property type="match status" value="1"/>
</dbReference>
<dbReference type="Pfam" id="PF13662">
    <property type="entry name" value="Toprim_4"/>
    <property type="match status" value="1"/>
</dbReference>
<dbReference type="SMART" id="SM00493">
    <property type="entry name" value="TOPRIM"/>
    <property type="match status" value="1"/>
</dbReference>
<dbReference type="SUPFAM" id="SSF111304">
    <property type="entry name" value="Recombination protein RecR"/>
    <property type="match status" value="1"/>
</dbReference>
<dbReference type="PROSITE" id="PS01300">
    <property type="entry name" value="RECR"/>
    <property type="match status" value="1"/>
</dbReference>
<dbReference type="PROSITE" id="PS50880">
    <property type="entry name" value="TOPRIM"/>
    <property type="match status" value="1"/>
</dbReference>
<gene>
    <name evidence="1" type="primary">recR</name>
    <name type="ordered locus">ECIAI1_0475</name>
</gene>